<dbReference type="EC" id="2.1.1.182" evidence="1"/>
<dbReference type="EMBL" id="CP000802">
    <property type="protein sequence ID" value="ABV04457.1"/>
    <property type="molecule type" value="Genomic_DNA"/>
</dbReference>
<dbReference type="RefSeq" id="WP_001065381.1">
    <property type="nucleotide sequence ID" value="NC_009800.1"/>
</dbReference>
<dbReference type="SMR" id="A7ZW03"/>
<dbReference type="GeneID" id="93777384"/>
<dbReference type="KEGG" id="ecx:EcHS_A0057"/>
<dbReference type="HOGENOM" id="CLU_041220_0_1_6"/>
<dbReference type="GO" id="GO:0005829">
    <property type="term" value="C:cytosol"/>
    <property type="evidence" value="ECO:0007669"/>
    <property type="project" value="TreeGrafter"/>
</dbReference>
<dbReference type="GO" id="GO:0052908">
    <property type="term" value="F:16S rRNA (adenine(1518)-N(6)/adenine(1519)-N(6))-dimethyltransferase activity"/>
    <property type="evidence" value="ECO:0007669"/>
    <property type="project" value="UniProtKB-EC"/>
</dbReference>
<dbReference type="GO" id="GO:0003723">
    <property type="term" value="F:RNA binding"/>
    <property type="evidence" value="ECO:0007669"/>
    <property type="project" value="UniProtKB-KW"/>
</dbReference>
<dbReference type="FunFam" id="1.10.8.100:FF:000001">
    <property type="entry name" value="Ribosomal RNA small subunit methyltransferase A"/>
    <property type="match status" value="1"/>
</dbReference>
<dbReference type="FunFam" id="3.40.50.150:FF:000006">
    <property type="entry name" value="Ribosomal RNA small subunit methyltransferase A"/>
    <property type="match status" value="1"/>
</dbReference>
<dbReference type="Gene3D" id="1.10.8.100">
    <property type="entry name" value="Ribosomal RNA adenine dimethylase-like, domain 2"/>
    <property type="match status" value="1"/>
</dbReference>
<dbReference type="Gene3D" id="3.40.50.150">
    <property type="entry name" value="Vaccinia Virus protein VP39"/>
    <property type="match status" value="1"/>
</dbReference>
<dbReference type="HAMAP" id="MF_00607">
    <property type="entry name" value="16SrRNA_methyltr_A"/>
    <property type="match status" value="1"/>
</dbReference>
<dbReference type="InterPro" id="IPR001737">
    <property type="entry name" value="KsgA/Erm"/>
</dbReference>
<dbReference type="InterPro" id="IPR023165">
    <property type="entry name" value="rRNA_Ade_diMease-like_C"/>
</dbReference>
<dbReference type="InterPro" id="IPR020596">
    <property type="entry name" value="rRNA_Ade_Mease_Trfase_CS"/>
</dbReference>
<dbReference type="InterPro" id="IPR020598">
    <property type="entry name" value="rRNA_Ade_methylase_Trfase_N"/>
</dbReference>
<dbReference type="InterPro" id="IPR011530">
    <property type="entry name" value="rRNA_adenine_dimethylase"/>
</dbReference>
<dbReference type="InterPro" id="IPR029063">
    <property type="entry name" value="SAM-dependent_MTases_sf"/>
</dbReference>
<dbReference type="NCBIfam" id="TIGR00755">
    <property type="entry name" value="ksgA"/>
    <property type="match status" value="1"/>
</dbReference>
<dbReference type="PANTHER" id="PTHR11727">
    <property type="entry name" value="DIMETHYLADENOSINE TRANSFERASE"/>
    <property type="match status" value="1"/>
</dbReference>
<dbReference type="PANTHER" id="PTHR11727:SF7">
    <property type="entry name" value="DIMETHYLADENOSINE TRANSFERASE-RELATED"/>
    <property type="match status" value="1"/>
</dbReference>
<dbReference type="Pfam" id="PF00398">
    <property type="entry name" value="RrnaAD"/>
    <property type="match status" value="1"/>
</dbReference>
<dbReference type="SMART" id="SM00650">
    <property type="entry name" value="rADc"/>
    <property type="match status" value="1"/>
</dbReference>
<dbReference type="SUPFAM" id="SSF53335">
    <property type="entry name" value="S-adenosyl-L-methionine-dependent methyltransferases"/>
    <property type="match status" value="1"/>
</dbReference>
<dbReference type="PROSITE" id="PS01131">
    <property type="entry name" value="RRNA_A_DIMETH"/>
    <property type="match status" value="1"/>
</dbReference>
<dbReference type="PROSITE" id="PS51689">
    <property type="entry name" value="SAM_RNA_A_N6_MT"/>
    <property type="match status" value="1"/>
</dbReference>
<accession>A7ZW03</accession>
<keyword id="KW-0963">Cytoplasm</keyword>
<keyword id="KW-0489">Methyltransferase</keyword>
<keyword id="KW-0694">RNA-binding</keyword>
<keyword id="KW-0698">rRNA processing</keyword>
<keyword id="KW-0949">S-adenosyl-L-methionine</keyword>
<keyword id="KW-0808">Transferase</keyword>
<gene>
    <name evidence="1" type="primary">rsmA</name>
    <name evidence="1" type="synonym">ksgA</name>
    <name type="ordered locus">EcHS_A0057</name>
</gene>
<feature type="chain" id="PRO_1000061283" description="Ribosomal RNA small subunit methyltransferase A">
    <location>
        <begin position="1"/>
        <end position="273"/>
    </location>
</feature>
<feature type="binding site" evidence="1">
    <location>
        <position position="18"/>
    </location>
    <ligand>
        <name>S-adenosyl-L-methionine</name>
        <dbReference type="ChEBI" id="CHEBI:59789"/>
    </ligand>
</feature>
<feature type="binding site" evidence="1">
    <location>
        <position position="20"/>
    </location>
    <ligand>
        <name>S-adenosyl-L-methionine</name>
        <dbReference type="ChEBI" id="CHEBI:59789"/>
    </ligand>
</feature>
<feature type="binding site" evidence="1">
    <location>
        <position position="45"/>
    </location>
    <ligand>
        <name>S-adenosyl-L-methionine</name>
        <dbReference type="ChEBI" id="CHEBI:59789"/>
    </ligand>
</feature>
<feature type="binding site" evidence="1">
    <location>
        <position position="66"/>
    </location>
    <ligand>
        <name>S-adenosyl-L-methionine</name>
        <dbReference type="ChEBI" id="CHEBI:59789"/>
    </ligand>
</feature>
<feature type="binding site" evidence="1">
    <location>
        <position position="91"/>
    </location>
    <ligand>
        <name>S-adenosyl-L-methionine</name>
        <dbReference type="ChEBI" id="CHEBI:59789"/>
    </ligand>
</feature>
<feature type="binding site" evidence="1">
    <location>
        <position position="113"/>
    </location>
    <ligand>
        <name>S-adenosyl-L-methionine</name>
        <dbReference type="ChEBI" id="CHEBI:59789"/>
    </ligand>
</feature>
<comment type="function">
    <text evidence="1">Specifically dimethylates two adjacent adenosines (A1518 and A1519) in the loop of a conserved hairpin near the 3'-end of 16S rRNA in the 30S particle. May play a critical role in biogenesis of 30S subunits.</text>
</comment>
<comment type="catalytic activity">
    <reaction evidence="1">
        <text>adenosine(1518)/adenosine(1519) in 16S rRNA + 4 S-adenosyl-L-methionine = N(6)-dimethyladenosine(1518)/N(6)-dimethyladenosine(1519) in 16S rRNA + 4 S-adenosyl-L-homocysteine + 4 H(+)</text>
        <dbReference type="Rhea" id="RHEA:19609"/>
        <dbReference type="Rhea" id="RHEA-COMP:10232"/>
        <dbReference type="Rhea" id="RHEA-COMP:10233"/>
        <dbReference type="ChEBI" id="CHEBI:15378"/>
        <dbReference type="ChEBI" id="CHEBI:57856"/>
        <dbReference type="ChEBI" id="CHEBI:59789"/>
        <dbReference type="ChEBI" id="CHEBI:74411"/>
        <dbReference type="ChEBI" id="CHEBI:74493"/>
        <dbReference type="EC" id="2.1.1.182"/>
    </reaction>
</comment>
<comment type="subcellular location">
    <subcellularLocation>
        <location evidence="1">Cytoplasm</location>
    </subcellularLocation>
</comment>
<comment type="similarity">
    <text evidence="1">Belongs to the class I-like SAM-binding methyltransferase superfamily. rRNA adenine N(6)-methyltransferase family. RsmA subfamily.</text>
</comment>
<proteinExistence type="inferred from homology"/>
<organism>
    <name type="scientific">Escherichia coli O9:H4 (strain HS)</name>
    <dbReference type="NCBI Taxonomy" id="331112"/>
    <lineage>
        <taxon>Bacteria</taxon>
        <taxon>Pseudomonadati</taxon>
        <taxon>Pseudomonadota</taxon>
        <taxon>Gammaproteobacteria</taxon>
        <taxon>Enterobacterales</taxon>
        <taxon>Enterobacteriaceae</taxon>
        <taxon>Escherichia</taxon>
    </lineage>
</organism>
<protein>
    <recommendedName>
        <fullName evidence="1">Ribosomal RNA small subunit methyltransferase A</fullName>
        <ecNumber evidence="1">2.1.1.182</ecNumber>
    </recommendedName>
    <alternativeName>
        <fullName evidence="1">16S rRNA (adenine(1518)-N(6)/adenine(1519)-N(6))-dimethyltransferase</fullName>
    </alternativeName>
    <alternativeName>
        <fullName evidence="1">16S rRNA dimethyladenosine transferase</fullName>
    </alternativeName>
    <alternativeName>
        <fullName evidence="1">16S rRNA dimethylase</fullName>
    </alternativeName>
    <alternativeName>
        <fullName evidence="1">S-adenosylmethionine-6-N', N'-adenosyl(rRNA) dimethyltransferase</fullName>
    </alternativeName>
</protein>
<sequence>MNNRVHQGHLARKRFGQNFLNDQFVIDSIVSAINPQKGQAMVEIGPGLAALTEPVGERLDQLTVIELDRDLAARLQTHPFLGPKLTIYQQDAMTFNFGELAEKMGQPLRVFGNLPYNISTPLMFHLFSYTDAIADMHFMLQKEVVNRLVAGPNSKAYGRLSVMAQYYCNVIPVLEVPPSAFTPPPKVDSAVVRLVPHATMPHPVKDVRVLSRITTEAFNQRRKTIRNSLGNLFSVEVLTGMGIDPAMRAENISVAQYCQMANYLAENAPLQES</sequence>
<reference key="1">
    <citation type="journal article" date="2008" name="J. Bacteriol.">
        <title>The pangenome structure of Escherichia coli: comparative genomic analysis of E. coli commensal and pathogenic isolates.</title>
        <authorList>
            <person name="Rasko D.A."/>
            <person name="Rosovitz M.J."/>
            <person name="Myers G.S.A."/>
            <person name="Mongodin E.F."/>
            <person name="Fricke W.F."/>
            <person name="Gajer P."/>
            <person name="Crabtree J."/>
            <person name="Sebaihia M."/>
            <person name="Thomson N.R."/>
            <person name="Chaudhuri R."/>
            <person name="Henderson I.R."/>
            <person name="Sperandio V."/>
            <person name="Ravel J."/>
        </authorList>
    </citation>
    <scope>NUCLEOTIDE SEQUENCE [LARGE SCALE GENOMIC DNA]</scope>
    <source>
        <strain>HS</strain>
    </source>
</reference>
<name>RSMA_ECOHS</name>
<evidence type="ECO:0000255" key="1">
    <source>
        <dbReference type="HAMAP-Rule" id="MF_00607"/>
    </source>
</evidence>